<keyword id="KW-0067">ATP-binding</keyword>
<keyword id="KW-0436">Ligase</keyword>
<keyword id="KW-0460">Magnesium</keyword>
<keyword id="KW-0464">Manganese</keyword>
<keyword id="KW-0479">Metal-binding</keyword>
<keyword id="KW-0547">Nucleotide-binding</keyword>
<keyword id="KW-0648">Protein biosynthesis</keyword>
<comment type="cofactor">
    <cofactor evidence="1">
        <name>Mg(2+)</name>
        <dbReference type="ChEBI" id="CHEBI:18420"/>
    </cofactor>
    <cofactor evidence="1">
        <name>Mn(2+)</name>
        <dbReference type="ChEBI" id="CHEBI:29035"/>
    </cofactor>
    <text evidence="1">Binds 2 magnesium or manganese ions per subunit.</text>
</comment>
<comment type="similarity">
    <text evidence="1">Belongs to the RimK family.</text>
</comment>
<protein>
    <recommendedName>
        <fullName evidence="1">Probable alpha-L-glutamate ligase 2</fullName>
        <ecNumber evidence="1">6.3.2.-</ecNumber>
    </recommendedName>
</protein>
<proteinExistence type="inferred from homology"/>
<accession>A6WT04</accession>
<name>RIMK2_SHEB8</name>
<dbReference type="EC" id="6.3.2.-" evidence="1"/>
<dbReference type="EMBL" id="CP000753">
    <property type="protein sequence ID" value="ABS09943.1"/>
    <property type="molecule type" value="Genomic_DNA"/>
</dbReference>
<dbReference type="RefSeq" id="WP_006079988.1">
    <property type="nucleotide sequence ID" value="NC_009665.1"/>
</dbReference>
<dbReference type="SMR" id="A6WT04"/>
<dbReference type="KEGG" id="sbm:Shew185_3819"/>
<dbReference type="HOGENOM" id="CLU_054353_0_1_6"/>
<dbReference type="GO" id="GO:0005737">
    <property type="term" value="C:cytoplasm"/>
    <property type="evidence" value="ECO:0007669"/>
    <property type="project" value="TreeGrafter"/>
</dbReference>
<dbReference type="GO" id="GO:0005524">
    <property type="term" value="F:ATP binding"/>
    <property type="evidence" value="ECO:0007669"/>
    <property type="project" value="UniProtKB-UniRule"/>
</dbReference>
<dbReference type="GO" id="GO:0046872">
    <property type="term" value="F:metal ion binding"/>
    <property type="evidence" value="ECO:0007669"/>
    <property type="project" value="UniProtKB-KW"/>
</dbReference>
<dbReference type="GO" id="GO:0018169">
    <property type="term" value="F:ribosomal S6-glutamic acid ligase activity"/>
    <property type="evidence" value="ECO:0007669"/>
    <property type="project" value="TreeGrafter"/>
</dbReference>
<dbReference type="GO" id="GO:0036211">
    <property type="term" value="P:protein modification process"/>
    <property type="evidence" value="ECO:0007669"/>
    <property type="project" value="InterPro"/>
</dbReference>
<dbReference type="GO" id="GO:0009432">
    <property type="term" value="P:SOS response"/>
    <property type="evidence" value="ECO:0007669"/>
    <property type="project" value="TreeGrafter"/>
</dbReference>
<dbReference type="GO" id="GO:0006412">
    <property type="term" value="P:translation"/>
    <property type="evidence" value="ECO:0007669"/>
    <property type="project" value="UniProtKB-KW"/>
</dbReference>
<dbReference type="FunFam" id="3.40.50.20:FF:000004">
    <property type="entry name" value="Probable alpha-L-glutamate ligase"/>
    <property type="match status" value="1"/>
</dbReference>
<dbReference type="FunFam" id="3.30.1490.20:FF:000005">
    <property type="entry name" value="Probable alpha-L-glutamate ligase 1"/>
    <property type="match status" value="1"/>
</dbReference>
<dbReference type="Gene3D" id="3.40.50.20">
    <property type="match status" value="1"/>
</dbReference>
<dbReference type="Gene3D" id="3.30.1490.20">
    <property type="entry name" value="ATP-grasp fold, A domain"/>
    <property type="match status" value="1"/>
</dbReference>
<dbReference type="Gene3D" id="3.30.470.20">
    <property type="entry name" value="ATP-grasp fold, B domain"/>
    <property type="match status" value="1"/>
</dbReference>
<dbReference type="HAMAP" id="MF_01552">
    <property type="entry name" value="RimK"/>
    <property type="match status" value="1"/>
</dbReference>
<dbReference type="InterPro" id="IPR011761">
    <property type="entry name" value="ATP-grasp"/>
</dbReference>
<dbReference type="InterPro" id="IPR013651">
    <property type="entry name" value="ATP-grasp_RimK-type"/>
</dbReference>
<dbReference type="InterPro" id="IPR013815">
    <property type="entry name" value="ATP_grasp_subdomain_1"/>
</dbReference>
<dbReference type="InterPro" id="IPR023533">
    <property type="entry name" value="RimK"/>
</dbReference>
<dbReference type="InterPro" id="IPR041107">
    <property type="entry name" value="Rimk_N"/>
</dbReference>
<dbReference type="InterPro" id="IPR004666">
    <property type="entry name" value="Rp_bS6_RimK/Lys_biosynth_LsyX"/>
</dbReference>
<dbReference type="NCBIfam" id="NF007764">
    <property type="entry name" value="PRK10446.1"/>
    <property type="match status" value="1"/>
</dbReference>
<dbReference type="NCBIfam" id="TIGR00768">
    <property type="entry name" value="rimK_fam"/>
    <property type="match status" value="1"/>
</dbReference>
<dbReference type="PANTHER" id="PTHR21621:SF7">
    <property type="entry name" value="RIBOSOMAL PROTEIN BS6--L-GLUTAMATE LIGASE"/>
    <property type="match status" value="1"/>
</dbReference>
<dbReference type="PANTHER" id="PTHR21621">
    <property type="entry name" value="RIBOSOMAL PROTEIN S6 MODIFICATION PROTEIN"/>
    <property type="match status" value="1"/>
</dbReference>
<dbReference type="Pfam" id="PF08443">
    <property type="entry name" value="RimK"/>
    <property type="match status" value="1"/>
</dbReference>
<dbReference type="Pfam" id="PF18030">
    <property type="entry name" value="Rimk_N"/>
    <property type="match status" value="1"/>
</dbReference>
<dbReference type="SUPFAM" id="SSF56059">
    <property type="entry name" value="Glutathione synthetase ATP-binding domain-like"/>
    <property type="match status" value="1"/>
</dbReference>
<dbReference type="PROSITE" id="PS50975">
    <property type="entry name" value="ATP_GRASP"/>
    <property type="match status" value="1"/>
</dbReference>
<organism>
    <name type="scientific">Shewanella baltica (strain OS185)</name>
    <dbReference type="NCBI Taxonomy" id="402882"/>
    <lineage>
        <taxon>Bacteria</taxon>
        <taxon>Pseudomonadati</taxon>
        <taxon>Pseudomonadota</taxon>
        <taxon>Gammaproteobacteria</taxon>
        <taxon>Alteromonadales</taxon>
        <taxon>Shewanellaceae</taxon>
        <taxon>Shewanella</taxon>
    </lineage>
</organism>
<gene>
    <name evidence="1" type="primary">rimK2</name>
    <name type="ordered locus">Shew185_3819</name>
</gene>
<sequence length="301" mass="32423">MKIGILSQFPQLYSTQRLVEACQSRGHEAVVINTLNCYMNINSIKPSIHYEGTELVGFDAIIPRIHASVTFYGCAVVRQFEMMGVYAANDSISIARSRDKLRALQLLSRKGIGMPVTGFANKPNDIPDLINMVGGAPLVIKLLEGTQGIGVVLAETKTAAESVIEAFLGLKANILVQEYIKESNGSDIRCFVVGDKVIASMKRQGPEGDFRSNLHLGGCGEVVKITAVERKMAIAAVKAMGLVVAGVDILRSNRGPLILEVNSAPGIEGIEQTTGISVTEPIVEYIEKMVAARKTNRPIIA</sequence>
<feature type="chain" id="PRO_0000340551" description="Probable alpha-L-glutamate ligase 2">
    <location>
        <begin position="1"/>
        <end position="301"/>
    </location>
</feature>
<feature type="domain" description="ATP-grasp" evidence="1">
    <location>
        <begin position="104"/>
        <end position="287"/>
    </location>
</feature>
<feature type="binding site" evidence="1">
    <location>
        <position position="141"/>
    </location>
    <ligand>
        <name>ATP</name>
        <dbReference type="ChEBI" id="CHEBI:30616"/>
    </ligand>
</feature>
<feature type="binding site" evidence="1">
    <location>
        <begin position="178"/>
        <end position="179"/>
    </location>
    <ligand>
        <name>ATP</name>
        <dbReference type="ChEBI" id="CHEBI:30616"/>
    </ligand>
</feature>
<feature type="binding site" evidence="1">
    <location>
        <position position="187"/>
    </location>
    <ligand>
        <name>ATP</name>
        <dbReference type="ChEBI" id="CHEBI:30616"/>
    </ligand>
</feature>
<feature type="binding site" evidence="1">
    <location>
        <begin position="211"/>
        <end position="213"/>
    </location>
    <ligand>
        <name>ATP</name>
        <dbReference type="ChEBI" id="CHEBI:30616"/>
    </ligand>
</feature>
<feature type="binding site" evidence="1">
    <location>
        <position position="248"/>
    </location>
    <ligand>
        <name>Mg(2+)</name>
        <dbReference type="ChEBI" id="CHEBI:18420"/>
        <label>1</label>
    </ligand>
</feature>
<feature type="binding site" evidence="1">
    <location>
        <position position="248"/>
    </location>
    <ligand>
        <name>Mn(2+)</name>
        <dbReference type="ChEBI" id="CHEBI:29035"/>
        <label>1</label>
    </ligand>
</feature>
<feature type="binding site" evidence="1">
    <location>
        <position position="260"/>
    </location>
    <ligand>
        <name>Mg(2+)</name>
        <dbReference type="ChEBI" id="CHEBI:18420"/>
        <label>1</label>
    </ligand>
</feature>
<feature type="binding site" evidence="1">
    <location>
        <position position="260"/>
    </location>
    <ligand>
        <name>Mg(2+)</name>
        <dbReference type="ChEBI" id="CHEBI:18420"/>
        <label>2</label>
    </ligand>
</feature>
<feature type="binding site" evidence="1">
    <location>
        <position position="260"/>
    </location>
    <ligand>
        <name>Mn(2+)</name>
        <dbReference type="ChEBI" id="CHEBI:29035"/>
        <label>1</label>
    </ligand>
</feature>
<feature type="binding site" evidence="1">
    <location>
        <position position="260"/>
    </location>
    <ligand>
        <name>Mn(2+)</name>
        <dbReference type="ChEBI" id="CHEBI:29035"/>
        <label>2</label>
    </ligand>
</feature>
<feature type="binding site" evidence="1">
    <location>
        <position position="262"/>
    </location>
    <ligand>
        <name>Mg(2+)</name>
        <dbReference type="ChEBI" id="CHEBI:18420"/>
        <label>2</label>
    </ligand>
</feature>
<feature type="binding site" evidence="1">
    <location>
        <position position="262"/>
    </location>
    <ligand>
        <name>Mn(2+)</name>
        <dbReference type="ChEBI" id="CHEBI:29035"/>
        <label>2</label>
    </ligand>
</feature>
<reference key="1">
    <citation type="submission" date="2007-07" db="EMBL/GenBank/DDBJ databases">
        <title>Complete sequence of chromosome of Shewanella baltica OS185.</title>
        <authorList>
            <consortium name="US DOE Joint Genome Institute"/>
            <person name="Copeland A."/>
            <person name="Lucas S."/>
            <person name="Lapidus A."/>
            <person name="Barry K."/>
            <person name="Glavina del Rio T."/>
            <person name="Dalin E."/>
            <person name="Tice H."/>
            <person name="Pitluck S."/>
            <person name="Sims D."/>
            <person name="Brettin T."/>
            <person name="Bruce D."/>
            <person name="Detter J.C."/>
            <person name="Han C."/>
            <person name="Schmutz J."/>
            <person name="Larimer F."/>
            <person name="Land M."/>
            <person name="Hauser L."/>
            <person name="Kyrpides N."/>
            <person name="Mikhailova N."/>
            <person name="Brettar I."/>
            <person name="Rodrigues J."/>
            <person name="Konstantinidis K."/>
            <person name="Tiedje J."/>
            <person name="Richardson P."/>
        </authorList>
    </citation>
    <scope>NUCLEOTIDE SEQUENCE [LARGE SCALE GENOMIC DNA]</scope>
    <source>
        <strain>OS185</strain>
    </source>
</reference>
<evidence type="ECO:0000255" key="1">
    <source>
        <dbReference type="HAMAP-Rule" id="MF_01552"/>
    </source>
</evidence>